<evidence type="ECO:0000305" key="1"/>
<evidence type="ECO:0007829" key="2">
    <source>
        <dbReference type="PDB" id="2OJH"/>
    </source>
</evidence>
<comment type="similarity">
    <text evidence="1">Belongs to the TolB family.</text>
</comment>
<comment type="sequence caution" evidence="1">
    <conflict type="erroneous initiation">
        <sequence resource="EMBL-CDS" id="AAK87430"/>
    </conflict>
</comment>
<gene>
    <name type="ordered locus">Atu1656</name>
    <name type="ORF">AGR_C_3050</name>
</gene>
<organism>
    <name type="scientific">Agrobacterium fabrum (strain C58 / ATCC 33970)</name>
    <name type="common">Agrobacterium tumefaciens (strain C58)</name>
    <dbReference type="NCBI Taxonomy" id="176299"/>
    <lineage>
        <taxon>Bacteria</taxon>
        <taxon>Pseudomonadati</taxon>
        <taxon>Pseudomonadota</taxon>
        <taxon>Alphaproteobacteria</taxon>
        <taxon>Hyphomicrobiales</taxon>
        <taxon>Rhizobiaceae</taxon>
        <taxon>Rhizobium/Agrobacterium group</taxon>
        <taxon>Agrobacterium</taxon>
        <taxon>Agrobacterium tumefaciens complex</taxon>
    </lineage>
</organism>
<proteinExistence type="evidence at protein level"/>
<name>Y1656_AGRFC</name>
<dbReference type="EMBL" id="AE007869">
    <property type="protein sequence ID" value="AAK87430.2"/>
    <property type="status" value="ALT_INIT"/>
    <property type="molecule type" value="Genomic_DNA"/>
</dbReference>
<dbReference type="PIR" id="AC2780">
    <property type="entry name" value="AC2780"/>
</dbReference>
<dbReference type="PIR" id="E97559">
    <property type="entry name" value="E97559"/>
</dbReference>
<dbReference type="RefSeq" id="NP_354645.2">
    <property type="nucleotide sequence ID" value="NC_003062.2"/>
</dbReference>
<dbReference type="RefSeq" id="WP_010971776.1">
    <property type="nucleotide sequence ID" value="NC_003062.2"/>
</dbReference>
<dbReference type="PDB" id="2OJH">
    <property type="method" value="X-ray"/>
    <property type="resolution" value="1.85 A"/>
    <property type="chains" value="A=1-293"/>
</dbReference>
<dbReference type="PDBsum" id="2OJH"/>
<dbReference type="SMR" id="Q8UEU8"/>
<dbReference type="STRING" id="176299.Atu1656"/>
<dbReference type="EnsemblBacteria" id="AAK87430">
    <property type="protein sequence ID" value="AAK87430"/>
    <property type="gene ID" value="Atu1656"/>
</dbReference>
<dbReference type="GeneID" id="1133694"/>
<dbReference type="KEGG" id="atu:Atu1656"/>
<dbReference type="PATRIC" id="fig|176299.10.peg.1675"/>
<dbReference type="eggNOG" id="COG0823">
    <property type="taxonomic scope" value="Bacteria"/>
</dbReference>
<dbReference type="HOGENOM" id="CLU_056136_0_0_5"/>
<dbReference type="OrthoDB" id="9758793at2"/>
<dbReference type="BioCyc" id="AGRO:ATU1656-MONOMER"/>
<dbReference type="EvolutionaryTrace" id="Q8UEU8"/>
<dbReference type="Proteomes" id="UP000000813">
    <property type="component" value="Chromosome circular"/>
</dbReference>
<dbReference type="Gene3D" id="2.120.10.30">
    <property type="entry name" value="TolB, C-terminal domain"/>
    <property type="match status" value="1"/>
</dbReference>
<dbReference type="InterPro" id="IPR011042">
    <property type="entry name" value="6-blade_b-propeller_TolB-like"/>
</dbReference>
<dbReference type="InterPro" id="IPR011659">
    <property type="entry name" value="PD40"/>
</dbReference>
<dbReference type="PANTHER" id="PTHR36842:SF1">
    <property type="entry name" value="PROTEIN TOLB"/>
    <property type="match status" value="1"/>
</dbReference>
<dbReference type="PANTHER" id="PTHR36842">
    <property type="entry name" value="PROTEIN TOLB HOMOLOG"/>
    <property type="match status" value="1"/>
</dbReference>
<dbReference type="Pfam" id="PF07676">
    <property type="entry name" value="PD40"/>
    <property type="match status" value="3"/>
</dbReference>
<dbReference type="SUPFAM" id="SSF82171">
    <property type="entry name" value="DPP6 N-terminal domain-like"/>
    <property type="match status" value="1"/>
</dbReference>
<reference key="1">
    <citation type="journal article" date="2001" name="Science">
        <title>The genome of the natural genetic engineer Agrobacterium tumefaciens C58.</title>
        <authorList>
            <person name="Wood D.W."/>
            <person name="Setubal J.C."/>
            <person name="Kaul R."/>
            <person name="Monks D.E."/>
            <person name="Kitajima J.P."/>
            <person name="Okura V.K."/>
            <person name="Zhou Y."/>
            <person name="Chen L."/>
            <person name="Wood G.E."/>
            <person name="Almeida N.F. Jr."/>
            <person name="Woo L."/>
            <person name="Chen Y."/>
            <person name="Paulsen I.T."/>
            <person name="Eisen J.A."/>
            <person name="Karp P.D."/>
            <person name="Bovee D. Sr."/>
            <person name="Chapman P."/>
            <person name="Clendenning J."/>
            <person name="Deatherage G."/>
            <person name="Gillet W."/>
            <person name="Grant C."/>
            <person name="Kutyavin T."/>
            <person name="Levy R."/>
            <person name="Li M.-J."/>
            <person name="McClelland E."/>
            <person name="Palmieri A."/>
            <person name="Raymond C."/>
            <person name="Rouse G."/>
            <person name="Saenphimmachak C."/>
            <person name="Wu Z."/>
            <person name="Romero P."/>
            <person name="Gordon D."/>
            <person name="Zhang S."/>
            <person name="Yoo H."/>
            <person name="Tao Y."/>
            <person name="Biddle P."/>
            <person name="Jung M."/>
            <person name="Krespan W."/>
            <person name="Perry M."/>
            <person name="Gordon-Kamm B."/>
            <person name="Liao L."/>
            <person name="Kim S."/>
            <person name="Hendrick C."/>
            <person name="Zhao Z.-Y."/>
            <person name="Dolan M."/>
            <person name="Chumley F."/>
            <person name="Tingey S.V."/>
            <person name="Tomb J.-F."/>
            <person name="Gordon M.P."/>
            <person name="Olson M.V."/>
            <person name="Nester E.W."/>
        </authorList>
    </citation>
    <scope>NUCLEOTIDE SEQUENCE [LARGE SCALE GENOMIC DNA]</scope>
    <source>
        <strain>C58 / ATCC 33970</strain>
    </source>
</reference>
<reference key="2">
    <citation type="journal article" date="2001" name="Science">
        <title>Genome sequence of the plant pathogen and biotechnology agent Agrobacterium tumefaciens C58.</title>
        <authorList>
            <person name="Goodner B."/>
            <person name="Hinkle G."/>
            <person name="Gattung S."/>
            <person name="Miller N."/>
            <person name="Blanchard M."/>
            <person name="Qurollo B."/>
            <person name="Goldman B.S."/>
            <person name="Cao Y."/>
            <person name="Askenazi M."/>
            <person name="Halling C."/>
            <person name="Mullin L."/>
            <person name="Houmiel K."/>
            <person name="Gordon J."/>
            <person name="Vaudin M."/>
            <person name="Iartchouk O."/>
            <person name="Epp A."/>
            <person name="Liu F."/>
            <person name="Wollam C."/>
            <person name="Allinger M."/>
            <person name="Doughty D."/>
            <person name="Scott C."/>
            <person name="Lappas C."/>
            <person name="Markelz B."/>
            <person name="Flanagan C."/>
            <person name="Crowell C."/>
            <person name="Gurson J."/>
            <person name="Lomo C."/>
            <person name="Sear C."/>
            <person name="Strub G."/>
            <person name="Cielo C."/>
            <person name="Slater S."/>
        </authorList>
    </citation>
    <scope>NUCLEOTIDE SEQUENCE [LARGE SCALE GENOMIC DNA]</scope>
    <source>
        <strain>C58 / ATCC 33970</strain>
    </source>
</reference>
<reference key="3">
    <citation type="submission" date="2007-02" db="PDB data bank">
        <title>The structure of putative tolb from Agrobacterium tumefaciens.</title>
        <authorList>
            <consortium name="Midwest center for structural genomics (MCSG)"/>
        </authorList>
    </citation>
    <scope>X-RAY CRYSTALLOGRAPHY (1.85 ANGSTROMS)</scope>
</reference>
<keyword id="KW-0002">3D-structure</keyword>
<keyword id="KW-1185">Reference proteome</keyword>
<protein>
    <recommendedName>
        <fullName>Uncharacterized protein Atu1656</fullName>
    </recommendedName>
</protein>
<feature type="chain" id="PRO_0000206089" description="Uncharacterized protein Atu1656">
    <location>
        <begin position="1"/>
        <end position="293"/>
    </location>
</feature>
<feature type="strand" evidence="2">
    <location>
        <begin position="20"/>
        <end position="26"/>
    </location>
</feature>
<feature type="turn" evidence="2">
    <location>
        <begin position="27"/>
        <end position="30"/>
    </location>
</feature>
<feature type="strand" evidence="2">
    <location>
        <begin position="31"/>
        <end position="40"/>
    </location>
</feature>
<feature type="strand" evidence="2">
    <location>
        <begin position="43"/>
        <end position="47"/>
    </location>
</feature>
<feature type="strand" evidence="2">
    <location>
        <begin position="51"/>
        <end position="58"/>
    </location>
</feature>
<feature type="strand" evidence="2">
    <location>
        <begin position="61"/>
        <end position="69"/>
    </location>
</feature>
<feature type="strand" evidence="2">
    <location>
        <begin position="94"/>
        <end position="101"/>
    </location>
</feature>
<feature type="turn" evidence="2">
    <location>
        <begin position="103"/>
        <end position="105"/>
    </location>
</feature>
<feature type="strand" evidence="2">
    <location>
        <begin position="109"/>
        <end position="114"/>
    </location>
</feature>
<feature type="strand" evidence="2">
    <location>
        <begin position="125"/>
        <end position="134"/>
    </location>
</feature>
<feature type="strand" evidence="2">
    <location>
        <begin position="138"/>
        <end position="147"/>
    </location>
</feature>
<feature type="strand" evidence="2">
    <location>
        <begin position="150"/>
        <end position="157"/>
    </location>
</feature>
<feature type="turn" evidence="2">
    <location>
        <begin position="158"/>
        <end position="160"/>
    </location>
</feature>
<feature type="strand" evidence="2">
    <location>
        <begin position="163"/>
        <end position="165"/>
    </location>
</feature>
<feature type="strand" evidence="2">
    <location>
        <begin position="169"/>
        <end position="171"/>
    </location>
</feature>
<feature type="strand" evidence="2">
    <location>
        <begin position="173"/>
        <end position="178"/>
    </location>
</feature>
<feature type="strand" evidence="2">
    <location>
        <begin position="182"/>
        <end position="189"/>
    </location>
</feature>
<feature type="strand" evidence="2">
    <location>
        <begin position="196"/>
        <end position="201"/>
    </location>
</feature>
<feature type="strand" evidence="2">
    <location>
        <begin position="207"/>
        <end position="209"/>
    </location>
</feature>
<feature type="strand" evidence="2">
    <location>
        <begin position="214"/>
        <end position="222"/>
    </location>
</feature>
<feature type="strand" evidence="2">
    <location>
        <begin position="226"/>
        <end position="235"/>
    </location>
</feature>
<feature type="strand" evidence="2">
    <location>
        <begin position="243"/>
        <end position="253"/>
    </location>
</feature>
<feature type="strand" evidence="2">
    <location>
        <begin position="260"/>
        <end position="268"/>
    </location>
</feature>
<feature type="turn" evidence="2">
    <location>
        <begin position="269"/>
        <end position="271"/>
    </location>
</feature>
<feature type="strand" evidence="2">
    <location>
        <begin position="281"/>
        <end position="289"/>
    </location>
</feature>
<sequence>MRQSTLHTRLSTGPGGSMRSSIEIFNIRTRKMRVVWQTPELFEAPNWSPDGKYLLLNSEGLLYRLSLAGDPSPEKVDTGFATICNNDHGISPDGALYAISDKVEFGKSAIYLLPSTGGTPRLMTKNLPSYWHGWSPDGKSFTYCGIRDQVFDIYSMDIDSGVETRLTHGEGRNDGPDYSPDGRWIYFNSSRTGQMQIWRVRVDGSSVERITDSAYGDWFPHPSPSGDKVVFVSYDADVFDHPRDLDVRVQLMDMDGGNVETLFDLFGGQGTMNSPNWSPDGDEFAYVRYFPVE</sequence>
<accession>Q8UEU8</accession>